<reference key="1">
    <citation type="journal article" date="1992" name="Eur. J. Biochem.">
        <title>Analysis of genes involved in the biosynthesis of lantibiotic epidermin.</title>
        <authorList>
            <person name="Schnell N."/>
            <person name="Engelke G."/>
            <person name="Augustin J."/>
            <person name="Rosenstein R."/>
            <person name="Ungermann V."/>
            <person name="Goetz F."/>
            <person name="Entian K.-D."/>
        </authorList>
    </citation>
    <scope>NUCLEOTIDE SEQUENCE [GENOMIC DNA]</scope>
    <source>
        <strain>TU 3298 / DSM 3095</strain>
    </source>
</reference>
<reference key="2">
    <citation type="journal article" date="1992" name="J. Bacteriol.">
        <title>Purification and characterization of EpiD, a flavoprotein involved in the biosynthesis of the lantibiotic epidermin.</title>
        <authorList>
            <person name="Kupke T."/>
            <person name="Stevanovic S."/>
            <person name="Sahl H.G."/>
            <person name="Goetz F."/>
        </authorList>
    </citation>
    <scope>CHARACTERIZATION</scope>
    <source>
        <strain>TU 3298 / DSM 3095</strain>
    </source>
</reference>
<reference key="3">
    <citation type="journal article" date="2000" name="J. Biol. Chem.">
        <title>Molecular characterization of lantibiotic-synthesizing enzyme EpiD reveals a function for bacterial Dfp proteins in coenzyme A biosynthesis.</title>
        <authorList>
            <person name="Kupke T."/>
            <person name="Uebele M."/>
            <person name="Schmid D."/>
            <person name="Jung G."/>
            <person name="Blaesse M."/>
            <person name="Steinbacher S."/>
        </authorList>
    </citation>
    <scope>CHARACTERIZATION OF ACTIVITY</scope>
    <scope>MUTAGENESIS OF PHE-43; HIS-67; GLU-75; PRO-81; SER-83; ALA-84; ASN-85; GLY-93; CYS-95; ASP-96; LEU-98; CYS-103; PRO-114; ASN-115; ASN-117 AND MET-120</scope>
</reference>
<reference key="4">
    <citation type="journal article" date="2000" name="EMBO J.">
        <title>Crystal structure of the peptidyl-cysteine decarboxylase EpiD complexed with a pentapeptide substrate.</title>
        <authorList>
            <person name="Blaesse M."/>
            <person name="Kupke T."/>
            <person name="Huber R."/>
            <person name="Steinbacher S."/>
        </authorList>
    </citation>
    <scope>X-RAY CRYSTALLOGRAPHY (2.5 ANGSTROMS)</scope>
</reference>
<evidence type="ECO:0000269" key="1">
    <source>
    </source>
</evidence>
<evidence type="ECO:0000305" key="2"/>
<evidence type="ECO:0007829" key="3">
    <source>
        <dbReference type="PDB" id="1G5Q"/>
    </source>
</evidence>
<evidence type="ECO:0007829" key="4">
    <source>
        <dbReference type="PDB" id="1G63"/>
    </source>
</evidence>
<comment type="function">
    <text>Catalyzes the removal of two reducing equivalents (oxidative decarboxylation) from the cysteine residue of the C-terminal meso-lanthionine of epidermin to form a --C==C-- double bond.</text>
</comment>
<comment type="cofactor">
    <cofactor>
        <name>FMN</name>
        <dbReference type="ChEBI" id="CHEBI:58210"/>
    </cofactor>
    <text>Binds 1 FMN per subunit.</text>
</comment>
<comment type="subunit">
    <text>Homododecamer.</text>
</comment>
<comment type="similarity">
    <text evidence="2">Belongs to the HFCD (homooligomeric flavin containing Cys decarboxylase) superfamily.</text>
</comment>
<accession>P30197</accession>
<organism>
    <name type="scientific">Staphylococcus epidermidis</name>
    <dbReference type="NCBI Taxonomy" id="1282"/>
    <lineage>
        <taxon>Bacteria</taxon>
        <taxon>Bacillati</taxon>
        <taxon>Bacillota</taxon>
        <taxon>Bacilli</taxon>
        <taxon>Bacillales</taxon>
        <taxon>Staphylococcaceae</taxon>
        <taxon>Staphylococcus</taxon>
    </lineage>
</organism>
<name>EPID_STAEP</name>
<sequence>MYGKLLICATASINVININHYIVELKQHFDEVNILFSPSSKNFINTDVLKLFCDNLYDEIKDPLLNHINIVENHEYILVLPASANTINKIANGICDNLLTTVCLTGYQKLFIFPNMNIRMWGNPFLQKNIDLLKNNDVKVYSPDMNKSFEISSGRYKNNITMPNIENVLNFVLNNEKRPLD</sequence>
<geneLocation type="plasmid">
    <name>pTu 32</name>
</geneLocation>
<protein>
    <recommendedName>
        <fullName>Epidermin decarboxylase</fullName>
        <ecNumber>4.1.1.-</ecNumber>
    </recommendedName>
    <alternativeName>
        <fullName>Epidermin-modifying enzyme EpiD</fullName>
    </alternativeName>
</protein>
<proteinExistence type="evidence at protein level"/>
<keyword id="KW-0002">3D-structure</keyword>
<keyword id="KW-0285">Flavoprotein</keyword>
<keyword id="KW-0288">FMN</keyword>
<keyword id="KW-0456">Lyase</keyword>
<keyword id="KW-0614">Plasmid</keyword>
<dbReference type="EC" id="4.1.1.-"/>
<dbReference type="EMBL" id="X62386">
    <property type="protein sequence ID" value="CAA44255.1"/>
    <property type="molecule type" value="Genomic_DNA"/>
</dbReference>
<dbReference type="PIR" id="S23418">
    <property type="entry name" value="S23418"/>
</dbReference>
<dbReference type="RefSeq" id="WP_059224768.1">
    <property type="nucleotide sequence ID" value="NZ_CZRO020000144.1"/>
</dbReference>
<dbReference type="PDB" id="1G5Q">
    <property type="method" value="X-ray"/>
    <property type="resolution" value="2.57 A"/>
    <property type="chains" value="A/D/G/L=1-181"/>
</dbReference>
<dbReference type="PDB" id="1G63">
    <property type="method" value="X-ray"/>
    <property type="resolution" value="2.50 A"/>
    <property type="chains" value="A/B/C/D/E/F/G/H/I/J/K/L=1-181"/>
</dbReference>
<dbReference type="PDBsum" id="1G5Q"/>
<dbReference type="PDBsum" id="1G63"/>
<dbReference type="SMR" id="P30197"/>
<dbReference type="DrugBank" id="DB03247">
    <property type="generic name" value="Flavin mononucleotide"/>
</dbReference>
<dbReference type="EvolutionaryTrace" id="P30197"/>
<dbReference type="GO" id="GO:0071513">
    <property type="term" value="C:phosphopantothenoylcysteine decarboxylase complex"/>
    <property type="evidence" value="ECO:0007669"/>
    <property type="project" value="TreeGrafter"/>
</dbReference>
<dbReference type="GO" id="GO:0010181">
    <property type="term" value="F:FMN binding"/>
    <property type="evidence" value="ECO:0007669"/>
    <property type="project" value="TreeGrafter"/>
</dbReference>
<dbReference type="GO" id="GO:0004633">
    <property type="term" value="F:phosphopantothenoylcysteine decarboxylase activity"/>
    <property type="evidence" value="ECO:0007669"/>
    <property type="project" value="TreeGrafter"/>
</dbReference>
<dbReference type="GO" id="GO:0015937">
    <property type="term" value="P:coenzyme A biosynthetic process"/>
    <property type="evidence" value="ECO:0007669"/>
    <property type="project" value="TreeGrafter"/>
</dbReference>
<dbReference type="Gene3D" id="3.40.50.1950">
    <property type="entry name" value="Flavin prenyltransferase-like"/>
    <property type="match status" value="1"/>
</dbReference>
<dbReference type="InterPro" id="IPR036551">
    <property type="entry name" value="Flavin_trans-like"/>
</dbReference>
<dbReference type="InterPro" id="IPR003382">
    <property type="entry name" value="Flavoprotein"/>
</dbReference>
<dbReference type="PANTHER" id="PTHR14359">
    <property type="entry name" value="HOMO-OLIGOMERIC FLAVIN CONTAINING CYS DECARBOXYLASE FAMILY"/>
    <property type="match status" value="1"/>
</dbReference>
<dbReference type="PANTHER" id="PTHR14359:SF6">
    <property type="entry name" value="PHOSPHOPANTOTHENOYLCYSTEINE DECARBOXYLASE"/>
    <property type="match status" value="1"/>
</dbReference>
<dbReference type="Pfam" id="PF02441">
    <property type="entry name" value="Flavoprotein"/>
    <property type="match status" value="1"/>
</dbReference>
<dbReference type="SUPFAM" id="SSF52507">
    <property type="entry name" value="Homo-oligomeric flavin-containing Cys decarboxylases, HFCD"/>
    <property type="match status" value="1"/>
</dbReference>
<gene>
    <name type="primary">epiD</name>
</gene>
<feature type="chain" id="PRO_0000182034" description="Epidermin decarboxylase">
    <location>
        <begin position="1"/>
        <end position="181"/>
    </location>
</feature>
<feature type="active site">
    <location>
        <position position="67"/>
    </location>
</feature>
<feature type="mutagenesis site" description="Binds FMN, but activity is significantly decreased." evidence="1">
    <original>F</original>
    <variation>L</variation>
    <location>
        <position position="43"/>
    </location>
</feature>
<feature type="mutagenesis site" description="Retains less than 1% activity, binds FMN." evidence="1">
    <original>H</original>
    <variation>N</variation>
    <location>
        <position position="67"/>
    </location>
</feature>
<feature type="mutagenesis site" description="Binds FMN." evidence="1">
    <original>E</original>
    <variation>D</variation>
    <variation>Q</variation>
    <location>
        <position position="75"/>
    </location>
</feature>
<feature type="mutagenesis site" description="Loss of FMN binding." evidence="1">
    <original>P</original>
    <variation>D</variation>
    <location>
        <position position="81"/>
    </location>
</feature>
<feature type="mutagenesis site" description="Loss of FMN binding." evidence="1">
    <original>S</original>
    <variation>A</variation>
    <location>
        <position position="83"/>
    </location>
</feature>
<feature type="mutagenesis site" description="Binds FMN." evidence="1">
    <original>S</original>
    <variation>T</variation>
    <location>
        <position position="83"/>
    </location>
</feature>
<feature type="mutagenesis site" description="Binds FMN." evidence="1">
    <original>A</original>
    <variation>V</variation>
    <location>
        <position position="84"/>
    </location>
</feature>
<feature type="mutagenesis site" description="Loss of FMN binding." evidence="1">
    <original>N</original>
    <variation>D</variation>
    <variation>H</variation>
    <location>
        <position position="85"/>
    </location>
</feature>
<feature type="mutagenesis site" description="Loss of FMN binding." evidence="1">
    <original>G</original>
    <variation>A</variation>
    <variation>D</variation>
    <location>
        <position position="93"/>
    </location>
</feature>
<feature type="mutagenesis site" description="Binds FMN." evidence="1">
    <original>C</original>
    <variation>A</variation>
    <location>
        <position position="95"/>
    </location>
</feature>
<feature type="mutagenesis site" description="Loss of FMN binding." evidence="1">
    <original>D</original>
    <variation>N</variation>
    <location>
        <position position="96"/>
    </location>
</feature>
<feature type="mutagenesis site" description="Binds FMN." evidence="1">
    <original>L</original>
    <variation>V</variation>
    <location>
        <position position="98"/>
    </location>
</feature>
<feature type="mutagenesis site" description="Binds FMN." evidence="1">
    <original>C</original>
    <variation>A</variation>
    <location>
        <position position="103"/>
    </location>
</feature>
<feature type="mutagenesis site" description="Loss of FMN binding." evidence="1">
    <original>P</original>
    <variation>A</variation>
    <location>
        <position position="114"/>
    </location>
</feature>
<feature type="mutagenesis site" description="Retains less than 1% activity, binds FMN." evidence="1">
    <original>N</original>
    <variation>D</variation>
    <location>
        <position position="115"/>
    </location>
</feature>
<feature type="mutagenesis site" description="Binds FMN." evidence="1">
    <original>N</original>
    <variation>D</variation>
    <location>
        <position position="117"/>
    </location>
</feature>
<feature type="mutagenesis site" description="Retains less than 1% activity, binds FMN." evidence="1">
    <original>M</original>
    <variation>L</variation>
    <location>
        <position position="120"/>
    </location>
</feature>
<feature type="strand" evidence="4">
    <location>
        <begin position="5"/>
        <end position="9"/>
    </location>
</feature>
<feature type="helix" evidence="4">
    <location>
        <begin position="13"/>
        <end position="17"/>
    </location>
</feature>
<feature type="helix" evidence="4">
    <location>
        <begin position="18"/>
        <end position="25"/>
    </location>
</feature>
<feature type="turn" evidence="4">
    <location>
        <begin position="26"/>
        <end position="28"/>
    </location>
</feature>
<feature type="strand" evidence="4">
    <location>
        <begin position="32"/>
        <end position="36"/>
    </location>
</feature>
<feature type="helix" evidence="4">
    <location>
        <begin position="38"/>
        <end position="42"/>
    </location>
</feature>
<feature type="helix" evidence="4">
    <location>
        <begin position="46"/>
        <end position="51"/>
    </location>
</feature>
<feature type="turn" evidence="4">
    <location>
        <begin position="59"/>
        <end position="61"/>
    </location>
</feature>
<feature type="helix" evidence="4">
    <location>
        <begin position="67"/>
        <end position="72"/>
    </location>
</feature>
<feature type="strand" evidence="4">
    <location>
        <begin position="75"/>
        <end position="82"/>
    </location>
</feature>
<feature type="helix" evidence="4">
    <location>
        <begin position="84"/>
        <end position="91"/>
    </location>
</feature>
<feature type="helix" evidence="4">
    <location>
        <begin position="98"/>
        <end position="105"/>
    </location>
</feature>
<feature type="helix" evidence="4">
    <location>
        <begin position="107"/>
        <end position="109"/>
    </location>
</feature>
<feature type="strand" evidence="4">
    <location>
        <begin position="110"/>
        <end position="114"/>
    </location>
</feature>
<feature type="helix" evidence="4">
    <location>
        <begin position="118"/>
        <end position="121"/>
    </location>
</feature>
<feature type="helix" evidence="4">
    <location>
        <begin position="124"/>
        <end position="134"/>
    </location>
</feature>
<feature type="turn" evidence="4">
    <location>
        <begin position="135"/>
        <end position="137"/>
    </location>
</feature>
<feature type="strand" evidence="3">
    <location>
        <begin position="144"/>
        <end position="150"/>
    </location>
</feature>
<feature type="strand" evidence="4">
    <location>
        <begin position="151"/>
        <end position="157"/>
    </location>
</feature>
<feature type="helix" evidence="4">
    <location>
        <begin position="165"/>
        <end position="173"/>
    </location>
</feature>